<reference key="1">
    <citation type="journal article" date="2006" name="Nature">
        <title>DNA sequence and analysis of human chromosome 8.</title>
        <authorList>
            <person name="Nusbaum C."/>
            <person name="Mikkelsen T.S."/>
            <person name="Zody M.C."/>
            <person name="Asakawa S."/>
            <person name="Taudien S."/>
            <person name="Garber M."/>
            <person name="Kodira C.D."/>
            <person name="Schueler M.G."/>
            <person name="Shimizu A."/>
            <person name="Whittaker C.A."/>
            <person name="Chang J.L."/>
            <person name="Cuomo C.A."/>
            <person name="Dewar K."/>
            <person name="FitzGerald M.G."/>
            <person name="Yang X."/>
            <person name="Allen N.R."/>
            <person name="Anderson S."/>
            <person name="Asakawa T."/>
            <person name="Blechschmidt K."/>
            <person name="Bloom T."/>
            <person name="Borowsky M.L."/>
            <person name="Butler J."/>
            <person name="Cook A."/>
            <person name="Corum B."/>
            <person name="DeArellano K."/>
            <person name="DeCaprio D."/>
            <person name="Dooley K.T."/>
            <person name="Dorris L. III"/>
            <person name="Engels R."/>
            <person name="Gloeckner G."/>
            <person name="Hafez N."/>
            <person name="Hagopian D.S."/>
            <person name="Hall J.L."/>
            <person name="Ishikawa S.K."/>
            <person name="Jaffe D.B."/>
            <person name="Kamat A."/>
            <person name="Kudoh J."/>
            <person name="Lehmann R."/>
            <person name="Lokitsang T."/>
            <person name="Macdonald P."/>
            <person name="Major J.E."/>
            <person name="Matthews C.D."/>
            <person name="Mauceli E."/>
            <person name="Menzel U."/>
            <person name="Mihalev A.H."/>
            <person name="Minoshima S."/>
            <person name="Murayama Y."/>
            <person name="Naylor J.W."/>
            <person name="Nicol R."/>
            <person name="Nguyen C."/>
            <person name="O'Leary S.B."/>
            <person name="O'Neill K."/>
            <person name="Parker S.C.J."/>
            <person name="Polley A."/>
            <person name="Raymond C.K."/>
            <person name="Reichwald K."/>
            <person name="Rodriguez J."/>
            <person name="Sasaki T."/>
            <person name="Schilhabel M."/>
            <person name="Siddiqui R."/>
            <person name="Smith C.L."/>
            <person name="Sneddon T.P."/>
            <person name="Talamas J.A."/>
            <person name="Tenzin P."/>
            <person name="Topham K."/>
            <person name="Venkataraman V."/>
            <person name="Wen G."/>
            <person name="Yamazaki S."/>
            <person name="Young S.K."/>
            <person name="Zeng Q."/>
            <person name="Zimmer A.R."/>
            <person name="Rosenthal A."/>
            <person name="Birren B.W."/>
            <person name="Platzer M."/>
            <person name="Shimizu N."/>
            <person name="Lander E.S."/>
        </authorList>
    </citation>
    <scope>NUCLEOTIDE SEQUENCE [LARGE SCALE GENOMIC DNA]</scope>
</reference>
<reference key="2">
    <citation type="journal article" date="2004" name="Genome Res.">
        <title>The status, quality, and expansion of the NIH full-length cDNA project: the Mammalian Gene Collection (MGC).</title>
        <authorList>
            <consortium name="The MGC Project Team"/>
        </authorList>
    </citation>
    <scope>NUCLEOTIDE SEQUENCE [LARGE SCALE MRNA]</scope>
    <source>
        <tissue>Eye</tissue>
    </source>
</reference>
<keyword id="KW-1185">Reference proteome</keyword>
<accession>Q9BWJ2</accession>
<protein>
    <recommendedName>
        <fullName>Putative uncharacterized protein encoded by RHPN1-AS1</fullName>
    </recommendedName>
    <alternativeName>
        <fullName>RHPN1 antisense RNA 1</fullName>
    </alternativeName>
    <alternativeName>
        <fullName>RHPN1 antisense gene protein 1</fullName>
    </alternativeName>
</protein>
<proteinExistence type="uncertain"/>
<sequence length="59" mass="6658">MPAFFSLPAERRLQAWPQSEAPLSVSSCFQNRPPEPASFQNLRPEPASLQNLRTEPTSF</sequence>
<feature type="chain" id="PRO_0000271053" description="Putative uncharacterized protein encoded by RHPN1-AS1">
    <location>
        <begin position="1"/>
        <end position="59"/>
    </location>
</feature>
<feature type="region of interest" description="Disordered" evidence="1">
    <location>
        <begin position="27"/>
        <end position="59"/>
    </location>
</feature>
<feature type="compositionally biased region" description="Polar residues" evidence="1">
    <location>
        <begin position="48"/>
        <end position="59"/>
    </location>
</feature>
<comment type="interaction">
    <interactant intactId="EBI-10300934">
        <id>Q9BWJ2</id>
    </interactant>
    <interactant intactId="EBI-1047263">
        <id>O76015</id>
        <label>KRT38</label>
    </interactant>
    <organismsDiffer>false</organismsDiffer>
    <experiments>3</experiments>
</comment>
<comment type="caution">
    <text evidence="2">Product of a dubious gene prediction.</text>
</comment>
<gene>
    <name type="primary">RHPN1-AS1</name>
    <name type="synonym">C8orf51</name>
</gene>
<dbReference type="EMBL" id="AC087793">
    <property type="status" value="NOT_ANNOTATED_CDS"/>
    <property type="molecule type" value="Genomic_DNA"/>
</dbReference>
<dbReference type="EMBL" id="BC000203">
    <property type="status" value="NOT_ANNOTATED_CDS"/>
    <property type="molecule type" value="mRNA"/>
</dbReference>
<dbReference type="IntAct" id="Q9BWJ2">
    <property type="interactions" value="1"/>
</dbReference>
<dbReference type="BioMuta" id="HGNC:28457"/>
<dbReference type="AGR" id="HGNC:28457"/>
<dbReference type="GeneCards" id="RHPN1-AS1"/>
<dbReference type="HGNC" id="HGNC:28457">
    <property type="gene designation" value="RHPN1-AS1"/>
</dbReference>
<dbReference type="neXtProt" id="NX_Q9BWJ2"/>
<dbReference type="InParanoid" id="Q9BWJ2"/>
<dbReference type="PAN-GO" id="Q9BWJ2">
    <property type="GO annotations" value="0 GO annotations based on evolutionary models"/>
</dbReference>
<dbReference type="PathwayCommons" id="Q9BWJ2"/>
<dbReference type="Pharos" id="Q9BWJ2">
    <property type="development level" value="Tdark"/>
</dbReference>
<dbReference type="Proteomes" id="UP000005640">
    <property type="component" value="Unplaced"/>
</dbReference>
<dbReference type="RNAct" id="Q9BWJ2">
    <property type="molecule type" value="protein"/>
</dbReference>
<organism>
    <name type="scientific">Homo sapiens</name>
    <name type="common">Human</name>
    <dbReference type="NCBI Taxonomy" id="9606"/>
    <lineage>
        <taxon>Eukaryota</taxon>
        <taxon>Metazoa</taxon>
        <taxon>Chordata</taxon>
        <taxon>Craniata</taxon>
        <taxon>Vertebrata</taxon>
        <taxon>Euteleostomi</taxon>
        <taxon>Mammalia</taxon>
        <taxon>Eutheria</taxon>
        <taxon>Euarchontoglires</taxon>
        <taxon>Primates</taxon>
        <taxon>Haplorrhini</taxon>
        <taxon>Catarrhini</taxon>
        <taxon>Hominidae</taxon>
        <taxon>Homo</taxon>
    </lineage>
</organism>
<evidence type="ECO:0000256" key="1">
    <source>
        <dbReference type="SAM" id="MobiDB-lite"/>
    </source>
</evidence>
<evidence type="ECO:0000305" key="2"/>
<name>RHAS1_HUMAN</name>